<proteinExistence type="evidence at transcript level"/>
<keyword id="KW-0238">DNA-binding</keyword>
<keyword id="KW-0479">Metal-binding</keyword>
<keyword id="KW-0539">Nucleus</keyword>
<keyword id="KW-1185">Reference proteome</keyword>
<keyword id="KW-0677">Repeat</keyword>
<keyword id="KW-0804">Transcription</keyword>
<keyword id="KW-0805">Transcription regulation</keyword>
<keyword id="KW-0862">Zinc</keyword>
<keyword id="KW-0863">Zinc-finger</keyword>
<dbReference type="EMBL" id="BC150058">
    <property type="protein sequence ID" value="AAI50059.1"/>
    <property type="molecule type" value="mRNA"/>
</dbReference>
<dbReference type="RefSeq" id="NP_001095467.1">
    <property type="nucleotide sequence ID" value="NM_001101997.1"/>
</dbReference>
<dbReference type="SMR" id="A6QR00"/>
<dbReference type="FunCoup" id="A6QR00">
    <property type="interactions" value="2649"/>
</dbReference>
<dbReference type="STRING" id="9913.ENSBTAP00000027659"/>
<dbReference type="PaxDb" id="9913-ENSBTAP00000027659"/>
<dbReference type="Ensembl" id="ENSBTAT00000027659.6">
    <property type="protein sequence ID" value="ENSBTAP00000027659.4"/>
    <property type="gene ID" value="ENSBTAG00000020754.6"/>
</dbReference>
<dbReference type="Ensembl" id="ENSBTAT00000092988.1">
    <property type="protein sequence ID" value="ENSBTAP00000094970.1"/>
    <property type="gene ID" value="ENSBTAG00000020754.6"/>
</dbReference>
<dbReference type="Ensembl" id="ENSBTAT00000135948.1">
    <property type="protein sequence ID" value="ENSBTAP00000089595.1"/>
    <property type="gene ID" value="ENSBTAG00000020754.6"/>
</dbReference>
<dbReference type="GeneID" id="514418"/>
<dbReference type="KEGG" id="bta:514418"/>
<dbReference type="CTD" id="116115"/>
<dbReference type="VEuPathDB" id="HostDB:ENSBTAG00000020754"/>
<dbReference type="VGNC" id="VGNC:37297">
    <property type="gene designation" value="ZNF526"/>
</dbReference>
<dbReference type="eggNOG" id="KOG1721">
    <property type="taxonomic scope" value="Eukaryota"/>
</dbReference>
<dbReference type="GeneTree" id="ENSGT00940000162624"/>
<dbReference type="HOGENOM" id="CLU_002678_24_3_1"/>
<dbReference type="InParanoid" id="A6QR00"/>
<dbReference type="OMA" id="DGPFQCG"/>
<dbReference type="OrthoDB" id="8922241at2759"/>
<dbReference type="TreeFam" id="TF350791"/>
<dbReference type="Proteomes" id="UP000009136">
    <property type="component" value="Chromosome 18"/>
</dbReference>
<dbReference type="Bgee" id="ENSBTAG00000020754">
    <property type="expression patterns" value="Expressed in laryngeal cartilage and 106 other cell types or tissues"/>
</dbReference>
<dbReference type="GO" id="GO:0005634">
    <property type="term" value="C:nucleus"/>
    <property type="evidence" value="ECO:0007669"/>
    <property type="project" value="UniProtKB-SubCell"/>
</dbReference>
<dbReference type="GO" id="GO:0003677">
    <property type="term" value="F:DNA binding"/>
    <property type="evidence" value="ECO:0007669"/>
    <property type="project" value="UniProtKB-KW"/>
</dbReference>
<dbReference type="GO" id="GO:0008270">
    <property type="term" value="F:zinc ion binding"/>
    <property type="evidence" value="ECO:0007669"/>
    <property type="project" value="UniProtKB-KW"/>
</dbReference>
<dbReference type="FunFam" id="3.30.160.60:FF:004072">
    <property type="match status" value="1"/>
</dbReference>
<dbReference type="FunFam" id="3.30.160.60:FF:000557">
    <property type="entry name" value="zinc finger and SCAN domain-containing protein 29"/>
    <property type="match status" value="1"/>
</dbReference>
<dbReference type="FunFam" id="3.30.160.60:FF:002041">
    <property type="entry name" value="Zinc finger protein 526"/>
    <property type="match status" value="1"/>
</dbReference>
<dbReference type="FunFam" id="3.30.160.60:FF:002659">
    <property type="entry name" value="Zinc finger protein 526"/>
    <property type="match status" value="1"/>
</dbReference>
<dbReference type="Gene3D" id="3.30.160.60">
    <property type="entry name" value="Classic Zinc Finger"/>
    <property type="match status" value="7"/>
</dbReference>
<dbReference type="InterPro" id="IPR036236">
    <property type="entry name" value="Znf_C2H2_sf"/>
</dbReference>
<dbReference type="InterPro" id="IPR013087">
    <property type="entry name" value="Znf_C2H2_type"/>
</dbReference>
<dbReference type="PANTHER" id="PTHR24376:SF243">
    <property type="entry name" value="C2H2-TYPE DOMAIN-CONTAINING PROTEIN"/>
    <property type="match status" value="1"/>
</dbReference>
<dbReference type="PANTHER" id="PTHR24376">
    <property type="entry name" value="ZINC FINGER PROTEIN"/>
    <property type="match status" value="1"/>
</dbReference>
<dbReference type="Pfam" id="PF00096">
    <property type="entry name" value="zf-C2H2"/>
    <property type="match status" value="3"/>
</dbReference>
<dbReference type="Pfam" id="PF13894">
    <property type="entry name" value="zf-C2H2_4"/>
    <property type="match status" value="1"/>
</dbReference>
<dbReference type="Pfam" id="PF13912">
    <property type="entry name" value="zf-C2H2_6"/>
    <property type="match status" value="1"/>
</dbReference>
<dbReference type="SMART" id="SM00355">
    <property type="entry name" value="ZnF_C2H2"/>
    <property type="match status" value="13"/>
</dbReference>
<dbReference type="SUPFAM" id="SSF57667">
    <property type="entry name" value="beta-beta-alpha zinc fingers"/>
    <property type="match status" value="7"/>
</dbReference>
<dbReference type="PROSITE" id="PS00028">
    <property type="entry name" value="ZINC_FINGER_C2H2_1"/>
    <property type="match status" value="12"/>
</dbReference>
<dbReference type="PROSITE" id="PS50157">
    <property type="entry name" value="ZINC_FINGER_C2H2_2"/>
    <property type="match status" value="11"/>
</dbReference>
<reference key="1">
    <citation type="submission" date="2007-07" db="EMBL/GenBank/DDBJ databases">
        <authorList>
            <consortium name="NIH - Mammalian Gene Collection (MGC) project"/>
        </authorList>
    </citation>
    <scope>NUCLEOTIDE SEQUENCE [LARGE SCALE MRNA]</scope>
    <source>
        <strain>Hereford</strain>
        <tissue>Fetal skin</tissue>
    </source>
</reference>
<sequence length="677" mass="73935">MAEVVAEVAEVAEMPTQMSPRVMEMSAPILGEKMELSTELTEMTPGEAVASSLFFQFMCSECGNLYNTLEEVLSHQEQHVPTVTEEEALTTQDTGLEPELVPGTEEGPFQCGECSQLILSPRELLAHQDAHLRESASQIQYQCGDCQELFPSPELWVAHRKAQHLSTAAAKPPVPPPLPPVTPPPPPPAPLEVKMEPYECPECSTLCTTPEEFLEHQGTHFDSLEKEEHNGLEEEEEDDEDDNEETEEEEEAAAEVGDDAKGGDKSAAGQAQGSGDGPPHCTSAGTRRRHRRASHGPASAAHPFYCSQCQRSFSSANRLLAHGRAHVGGTHECTTCSKVFKKAASLEQHLRLHRGEARYLCVDCGRGFGTELTLVAHRRAHTANPLHRCRCGKTFSNMTKFLYHRRTHAGKSGAPPSAAPPTVASAVASLAPAEPTPPPPAPPTPPAQLPCPQCPKSFASASRLSRHRRAVHGPPERRHRCGVCGKGFKKLVHVRNHLRTHTGERPFQCHACGKTFASLANLSRHQLTHTGVRPYQCLDCGKRFTQSSNLQQHRRLHLRPVAFARAPRLPITGLYNKSPYYCGTCGRWFRAMAGLRLHQRVHAQARTLTLQPPRSPPPAPPPPPEPQQTIMCTELGETIAIIETSQPLALADTLQLCQAALGASEASGLLQLDTAFM</sequence>
<gene>
    <name type="primary">ZNF526</name>
</gene>
<name>ZN526_BOVIN</name>
<feature type="chain" id="PRO_0000306874" description="Zinc finger protein 526">
    <location>
        <begin position="1"/>
        <end position="677"/>
    </location>
</feature>
<feature type="zinc finger region" description="C2H2-type 1" evidence="2">
    <location>
        <begin position="57"/>
        <end position="79"/>
    </location>
</feature>
<feature type="zinc finger region" description="C2H2-type 2" evidence="2">
    <location>
        <begin position="109"/>
        <end position="131"/>
    </location>
</feature>
<feature type="zinc finger region" description="C2H2-type 3" evidence="2">
    <location>
        <begin position="141"/>
        <end position="164"/>
    </location>
</feature>
<feature type="zinc finger region" description="C2H2-type 4" evidence="2">
    <location>
        <begin position="198"/>
        <end position="220"/>
    </location>
</feature>
<feature type="zinc finger region" description="C2H2-type 5" evidence="2">
    <location>
        <begin position="304"/>
        <end position="326"/>
    </location>
</feature>
<feature type="zinc finger region" description="C2H2-type 6" evidence="2">
    <location>
        <begin position="331"/>
        <end position="353"/>
    </location>
</feature>
<feature type="zinc finger region" description="C2H2-type 7" evidence="2">
    <location>
        <begin position="359"/>
        <end position="381"/>
    </location>
</feature>
<feature type="zinc finger region" description="C2H2-type 8" evidence="2">
    <location>
        <begin position="387"/>
        <end position="408"/>
    </location>
</feature>
<feature type="zinc finger region" description="C2H2-type 9" evidence="2">
    <location>
        <begin position="449"/>
        <end position="472"/>
    </location>
</feature>
<feature type="zinc finger region" description="C2H2-type 10" evidence="2">
    <location>
        <begin position="479"/>
        <end position="501"/>
    </location>
</feature>
<feature type="zinc finger region" description="C2H2-type 11" evidence="2">
    <location>
        <begin position="507"/>
        <end position="529"/>
    </location>
</feature>
<feature type="zinc finger region" description="C2H2-type 12" evidence="2">
    <location>
        <begin position="535"/>
        <end position="557"/>
    </location>
</feature>
<feature type="zinc finger region" description="C2H2-type 13" evidence="2">
    <location>
        <begin position="580"/>
        <end position="602"/>
    </location>
</feature>
<feature type="region of interest" description="Disordered" evidence="3">
    <location>
        <begin position="167"/>
        <end position="190"/>
    </location>
</feature>
<feature type="region of interest" description="Disordered" evidence="3">
    <location>
        <begin position="223"/>
        <end position="300"/>
    </location>
</feature>
<feature type="region of interest" description="Disordered" evidence="3">
    <location>
        <begin position="408"/>
        <end position="449"/>
    </location>
</feature>
<feature type="region of interest" description="Disordered" evidence="3">
    <location>
        <begin position="608"/>
        <end position="627"/>
    </location>
</feature>
<feature type="compositionally biased region" description="Pro residues" evidence="3">
    <location>
        <begin position="172"/>
        <end position="190"/>
    </location>
</feature>
<feature type="compositionally biased region" description="Basic and acidic residues" evidence="3">
    <location>
        <begin position="223"/>
        <end position="232"/>
    </location>
</feature>
<feature type="compositionally biased region" description="Acidic residues" evidence="3">
    <location>
        <begin position="233"/>
        <end position="257"/>
    </location>
</feature>
<feature type="compositionally biased region" description="Low complexity" evidence="3">
    <location>
        <begin position="410"/>
        <end position="433"/>
    </location>
</feature>
<feature type="compositionally biased region" description="Pro residues" evidence="3">
    <location>
        <begin position="434"/>
        <end position="449"/>
    </location>
</feature>
<feature type="compositionally biased region" description="Pro residues" evidence="3">
    <location>
        <begin position="613"/>
        <end position="626"/>
    </location>
</feature>
<accession>A6QR00</accession>
<protein>
    <recommendedName>
        <fullName>Zinc finger protein 526</fullName>
    </recommendedName>
</protein>
<evidence type="ECO:0000250" key="1"/>
<evidence type="ECO:0000255" key="2">
    <source>
        <dbReference type="PROSITE-ProRule" id="PRU00042"/>
    </source>
</evidence>
<evidence type="ECO:0000256" key="3">
    <source>
        <dbReference type="SAM" id="MobiDB-lite"/>
    </source>
</evidence>
<evidence type="ECO:0000305" key="4"/>
<comment type="function">
    <text evidence="1">May be involved in transcriptional regulation.</text>
</comment>
<comment type="subcellular location">
    <subcellularLocation>
        <location evidence="4">Nucleus</location>
    </subcellularLocation>
</comment>
<comment type="similarity">
    <text evidence="4">Belongs to the krueppel C2H2-type zinc-finger protein family.</text>
</comment>
<organism>
    <name type="scientific">Bos taurus</name>
    <name type="common">Bovine</name>
    <dbReference type="NCBI Taxonomy" id="9913"/>
    <lineage>
        <taxon>Eukaryota</taxon>
        <taxon>Metazoa</taxon>
        <taxon>Chordata</taxon>
        <taxon>Craniata</taxon>
        <taxon>Vertebrata</taxon>
        <taxon>Euteleostomi</taxon>
        <taxon>Mammalia</taxon>
        <taxon>Eutheria</taxon>
        <taxon>Laurasiatheria</taxon>
        <taxon>Artiodactyla</taxon>
        <taxon>Ruminantia</taxon>
        <taxon>Pecora</taxon>
        <taxon>Bovidae</taxon>
        <taxon>Bovinae</taxon>
        <taxon>Bos</taxon>
    </lineage>
</organism>